<gene>
    <name evidence="1" type="primary">ureG</name>
    <name type="ordered locus">Meso_2687</name>
</gene>
<organism>
    <name type="scientific">Chelativorans sp. (strain BNC1)</name>
    <dbReference type="NCBI Taxonomy" id="266779"/>
    <lineage>
        <taxon>Bacteria</taxon>
        <taxon>Pseudomonadati</taxon>
        <taxon>Pseudomonadota</taxon>
        <taxon>Alphaproteobacteria</taxon>
        <taxon>Hyphomicrobiales</taxon>
        <taxon>Phyllobacteriaceae</taxon>
        <taxon>Chelativorans</taxon>
    </lineage>
</organism>
<reference key="1">
    <citation type="submission" date="2006-06" db="EMBL/GenBank/DDBJ databases">
        <title>Complete sequence of chromosome of Mesorhizobium sp. BNC1.</title>
        <authorList>
            <consortium name="US DOE Joint Genome Institute"/>
            <person name="Copeland A."/>
            <person name="Lucas S."/>
            <person name="Lapidus A."/>
            <person name="Barry K."/>
            <person name="Detter J.C."/>
            <person name="Glavina del Rio T."/>
            <person name="Hammon N."/>
            <person name="Israni S."/>
            <person name="Dalin E."/>
            <person name="Tice H."/>
            <person name="Pitluck S."/>
            <person name="Chertkov O."/>
            <person name="Brettin T."/>
            <person name="Bruce D."/>
            <person name="Han C."/>
            <person name="Tapia R."/>
            <person name="Gilna P."/>
            <person name="Schmutz J."/>
            <person name="Larimer F."/>
            <person name="Land M."/>
            <person name="Hauser L."/>
            <person name="Kyrpides N."/>
            <person name="Mikhailova N."/>
            <person name="Richardson P."/>
        </authorList>
    </citation>
    <scope>NUCLEOTIDE SEQUENCE [LARGE SCALE GENOMIC DNA]</scope>
    <source>
        <strain>BNC1</strain>
    </source>
</reference>
<dbReference type="EMBL" id="CP000390">
    <property type="protein sequence ID" value="ABG64064.1"/>
    <property type="molecule type" value="Genomic_DNA"/>
</dbReference>
<dbReference type="SMR" id="Q11EW1"/>
<dbReference type="STRING" id="266779.Meso_2687"/>
<dbReference type="KEGG" id="mes:Meso_2687"/>
<dbReference type="eggNOG" id="COG0378">
    <property type="taxonomic scope" value="Bacteria"/>
</dbReference>
<dbReference type="HOGENOM" id="CLU_072144_1_0_5"/>
<dbReference type="OrthoDB" id="9802035at2"/>
<dbReference type="GO" id="GO:0005737">
    <property type="term" value="C:cytoplasm"/>
    <property type="evidence" value="ECO:0007669"/>
    <property type="project" value="UniProtKB-SubCell"/>
</dbReference>
<dbReference type="GO" id="GO:0005525">
    <property type="term" value="F:GTP binding"/>
    <property type="evidence" value="ECO:0007669"/>
    <property type="project" value="UniProtKB-KW"/>
</dbReference>
<dbReference type="GO" id="GO:0003924">
    <property type="term" value="F:GTPase activity"/>
    <property type="evidence" value="ECO:0007669"/>
    <property type="project" value="InterPro"/>
</dbReference>
<dbReference type="GO" id="GO:0016151">
    <property type="term" value="F:nickel cation binding"/>
    <property type="evidence" value="ECO:0007669"/>
    <property type="project" value="UniProtKB-UniRule"/>
</dbReference>
<dbReference type="GO" id="GO:0043419">
    <property type="term" value="P:urea catabolic process"/>
    <property type="evidence" value="ECO:0007669"/>
    <property type="project" value="InterPro"/>
</dbReference>
<dbReference type="CDD" id="cd05540">
    <property type="entry name" value="UreG"/>
    <property type="match status" value="1"/>
</dbReference>
<dbReference type="FunFam" id="3.40.50.300:FF:000208">
    <property type="entry name" value="Urease accessory protein UreG"/>
    <property type="match status" value="1"/>
</dbReference>
<dbReference type="Gene3D" id="3.40.50.300">
    <property type="entry name" value="P-loop containing nucleotide triphosphate hydrolases"/>
    <property type="match status" value="1"/>
</dbReference>
<dbReference type="HAMAP" id="MF_01389">
    <property type="entry name" value="UreG"/>
    <property type="match status" value="1"/>
</dbReference>
<dbReference type="InterPro" id="IPR003495">
    <property type="entry name" value="CobW/HypB/UreG_nucleotide-bd"/>
</dbReference>
<dbReference type="InterPro" id="IPR027417">
    <property type="entry name" value="P-loop_NTPase"/>
</dbReference>
<dbReference type="InterPro" id="IPR004400">
    <property type="entry name" value="UreG"/>
</dbReference>
<dbReference type="NCBIfam" id="TIGR00101">
    <property type="entry name" value="ureG"/>
    <property type="match status" value="1"/>
</dbReference>
<dbReference type="PANTHER" id="PTHR31715">
    <property type="entry name" value="UREASE ACCESSORY PROTEIN G"/>
    <property type="match status" value="1"/>
</dbReference>
<dbReference type="PANTHER" id="PTHR31715:SF0">
    <property type="entry name" value="UREASE ACCESSORY PROTEIN G"/>
    <property type="match status" value="1"/>
</dbReference>
<dbReference type="Pfam" id="PF02492">
    <property type="entry name" value="cobW"/>
    <property type="match status" value="1"/>
</dbReference>
<dbReference type="PIRSF" id="PIRSF005624">
    <property type="entry name" value="Ni-bind_GTPase"/>
    <property type="match status" value="1"/>
</dbReference>
<dbReference type="SUPFAM" id="SSF52540">
    <property type="entry name" value="P-loop containing nucleoside triphosphate hydrolases"/>
    <property type="match status" value="1"/>
</dbReference>
<proteinExistence type="inferred from homology"/>
<protein>
    <recommendedName>
        <fullName evidence="1">Urease accessory protein UreG</fullName>
    </recommendedName>
</protein>
<comment type="function">
    <text evidence="1">Facilitates the functional incorporation of the urease nickel metallocenter. This process requires GTP hydrolysis, probably effectuated by UreG.</text>
</comment>
<comment type="subunit">
    <text evidence="1">Homodimer. UreD, UreF and UreG form a complex that acts as a GTP-hydrolysis-dependent molecular chaperone, activating the urease apoprotein by helping to assemble the nickel containing metallocenter of UreC. The UreE protein probably delivers the nickel.</text>
</comment>
<comment type="subcellular location">
    <subcellularLocation>
        <location evidence="1">Cytoplasm</location>
    </subcellularLocation>
</comment>
<comment type="similarity">
    <text evidence="1">Belongs to the SIMIBI class G3E GTPase family. UreG subfamily.</text>
</comment>
<accession>Q11EW1</accession>
<name>UREG_CHESB</name>
<feature type="chain" id="PRO_1000145186" description="Urease accessory protein UreG">
    <location>
        <begin position="1"/>
        <end position="207"/>
    </location>
</feature>
<feature type="binding site" evidence="1">
    <location>
        <begin position="14"/>
        <end position="21"/>
    </location>
    <ligand>
        <name>GTP</name>
        <dbReference type="ChEBI" id="CHEBI:37565"/>
    </ligand>
</feature>
<evidence type="ECO:0000255" key="1">
    <source>
        <dbReference type="HAMAP-Rule" id="MF_01389"/>
    </source>
</evidence>
<sequence>MKSSNGPLRIGIGGPVGSGKTTLCEVLLKSMRDRYSMAVVTNDIYTKEDALILARLQAISEDRIVGVETGGCPHTAIREDASLNLAAIAHLNRRFPDLDIILIESGGDNLAATFSPDLADLTLYVISVAQGEKIPRKGGPAITRSDLLIINKTDLAPYVGANLDVMRSDTEKVREGRPYVMTDLSRRQGAEEVVAFIEKMGGLALAA</sequence>
<keyword id="KW-0143">Chaperone</keyword>
<keyword id="KW-0963">Cytoplasm</keyword>
<keyword id="KW-0342">GTP-binding</keyword>
<keyword id="KW-0996">Nickel insertion</keyword>
<keyword id="KW-0547">Nucleotide-binding</keyword>